<keyword id="KW-0687">Ribonucleoprotein</keyword>
<keyword id="KW-0689">Ribosomal protein</keyword>
<keyword id="KW-0694">RNA-binding</keyword>
<keyword id="KW-0699">rRNA-binding</keyword>
<feature type="chain" id="PRO_0000310054" description="Large ribosomal subunit protein uL2">
    <location>
        <begin position="1"/>
        <end position="233"/>
    </location>
</feature>
<feature type="region of interest" description="Disordered" evidence="2">
    <location>
        <begin position="194"/>
        <end position="233"/>
    </location>
</feature>
<feature type="compositionally biased region" description="Basic residues" evidence="2">
    <location>
        <begin position="219"/>
        <end position="233"/>
    </location>
</feature>
<sequence length="233" mass="25359">MGKHIVAQRRGHGSLVYRSPSHRHLGDIKYPRDGTYKIEDIIQAPGRNTPVLLIRNEKNEKNYMIAFNGAYVNQEIHVGDIDSPAIGDVTYLANIPDGSYVYNIESIPGDGGKFCRAAGTAALVISHGAYVSLKLPSGVNKEFHPRCRATVGFIAGSGARDIPILKAGTHIKYLQSKAKRPYTVRGVAMNAVNHPHGGGNHQHVGRPSTVGRGTPPGRKVGRLSPKRRKKYGR</sequence>
<proteinExistence type="inferred from homology"/>
<reference key="1">
    <citation type="journal article" date="2004" name="Proc. Natl. Acad. Sci. U.S.A.">
        <title>Genome sequence of Picrophilus torridus and its implications for life around pH 0.</title>
        <authorList>
            <person name="Fuetterer O."/>
            <person name="Angelov A."/>
            <person name="Liesegang H."/>
            <person name="Gottschalk G."/>
            <person name="Schleper C."/>
            <person name="Schepers B."/>
            <person name="Dock C."/>
            <person name="Antranikian G."/>
            <person name="Liebl W."/>
        </authorList>
    </citation>
    <scope>NUCLEOTIDE SEQUENCE [LARGE SCALE GENOMIC DNA]</scope>
    <source>
        <strain>ATCC 700027 / DSM 9790 / JCM 10055 / NBRC 100828 / KAW 2/3</strain>
    </source>
</reference>
<accession>Q6L1C4</accession>
<protein>
    <recommendedName>
        <fullName evidence="1">Large ribosomal subunit protein uL2</fullName>
    </recommendedName>
    <alternativeName>
        <fullName evidence="3">50S ribosomal protein L2</fullName>
    </alternativeName>
</protein>
<gene>
    <name evidence="1" type="primary">rpl2</name>
    <name type="ordered locus">PTO0643</name>
</gene>
<organism>
    <name type="scientific">Picrophilus torridus (strain ATCC 700027 / DSM 9790 / JCM 10055 / NBRC 100828 / KAW 2/3)</name>
    <dbReference type="NCBI Taxonomy" id="1122961"/>
    <lineage>
        <taxon>Archaea</taxon>
        <taxon>Methanobacteriati</taxon>
        <taxon>Thermoplasmatota</taxon>
        <taxon>Thermoplasmata</taxon>
        <taxon>Thermoplasmatales</taxon>
        <taxon>Picrophilaceae</taxon>
        <taxon>Picrophilus</taxon>
    </lineage>
</organism>
<comment type="function">
    <text evidence="1">One of the primary rRNA binding proteins. Required for association of the 30S and 50S subunits to form the 70S ribosome, for tRNA binding and peptide bond formation. It has been suggested to have peptidyltransferase activity; this is somewhat controversial. Makes several contacts with the 16S rRNA in the 70S ribosome.</text>
</comment>
<comment type="subunit">
    <text evidence="1">Part of the 50S ribosomal subunit. Forms a bridge to the 30S subunit in the 70S ribosome.</text>
</comment>
<comment type="similarity">
    <text evidence="1">Belongs to the universal ribosomal protein uL2 family.</text>
</comment>
<dbReference type="EMBL" id="AE017261">
    <property type="protein sequence ID" value="AAT43228.1"/>
    <property type="molecule type" value="Genomic_DNA"/>
</dbReference>
<dbReference type="RefSeq" id="WP_011177444.1">
    <property type="nucleotide sequence ID" value="NC_005877.1"/>
</dbReference>
<dbReference type="SMR" id="Q6L1C4"/>
<dbReference type="FunCoup" id="Q6L1C4">
    <property type="interactions" value="163"/>
</dbReference>
<dbReference type="STRING" id="263820.PTO0643"/>
<dbReference type="PaxDb" id="263820-PTO0643"/>
<dbReference type="GeneID" id="2844606"/>
<dbReference type="KEGG" id="pto:PTO0643"/>
<dbReference type="PATRIC" id="fig|263820.9.peg.675"/>
<dbReference type="eggNOG" id="arCOG04067">
    <property type="taxonomic scope" value="Archaea"/>
</dbReference>
<dbReference type="HOGENOM" id="CLU_036235_0_1_2"/>
<dbReference type="InParanoid" id="Q6L1C4"/>
<dbReference type="OrthoDB" id="5987at2157"/>
<dbReference type="Proteomes" id="UP000000438">
    <property type="component" value="Chromosome"/>
</dbReference>
<dbReference type="GO" id="GO:0022625">
    <property type="term" value="C:cytosolic large ribosomal subunit"/>
    <property type="evidence" value="ECO:0007669"/>
    <property type="project" value="TreeGrafter"/>
</dbReference>
<dbReference type="GO" id="GO:0019843">
    <property type="term" value="F:rRNA binding"/>
    <property type="evidence" value="ECO:0007669"/>
    <property type="project" value="UniProtKB-UniRule"/>
</dbReference>
<dbReference type="GO" id="GO:0003735">
    <property type="term" value="F:structural constituent of ribosome"/>
    <property type="evidence" value="ECO:0007669"/>
    <property type="project" value="InterPro"/>
</dbReference>
<dbReference type="GO" id="GO:0002181">
    <property type="term" value="P:cytoplasmic translation"/>
    <property type="evidence" value="ECO:0007669"/>
    <property type="project" value="TreeGrafter"/>
</dbReference>
<dbReference type="Gene3D" id="2.30.30.30">
    <property type="match status" value="1"/>
</dbReference>
<dbReference type="Gene3D" id="2.40.50.140">
    <property type="entry name" value="Nucleic acid-binding proteins"/>
    <property type="match status" value="1"/>
</dbReference>
<dbReference type="Gene3D" id="4.10.950.10">
    <property type="entry name" value="Ribosomal protein L2, domain 3"/>
    <property type="match status" value="1"/>
</dbReference>
<dbReference type="HAMAP" id="MF_01320_A">
    <property type="entry name" value="Ribosomal_uL2_A"/>
    <property type="match status" value="1"/>
</dbReference>
<dbReference type="InterPro" id="IPR012340">
    <property type="entry name" value="NA-bd_OB-fold"/>
</dbReference>
<dbReference type="InterPro" id="IPR014722">
    <property type="entry name" value="Rib_uL2_dom2"/>
</dbReference>
<dbReference type="InterPro" id="IPR002171">
    <property type="entry name" value="Ribosomal_uL2"/>
</dbReference>
<dbReference type="InterPro" id="IPR023672">
    <property type="entry name" value="Ribosomal_uL2_arc_euk"/>
</dbReference>
<dbReference type="InterPro" id="IPR022669">
    <property type="entry name" value="Ribosomal_uL2_C"/>
</dbReference>
<dbReference type="InterPro" id="IPR014726">
    <property type="entry name" value="Ribosomal_uL2_dom3"/>
</dbReference>
<dbReference type="InterPro" id="IPR022666">
    <property type="entry name" value="Ribosomal_uL2_RNA-bd_dom"/>
</dbReference>
<dbReference type="InterPro" id="IPR008991">
    <property type="entry name" value="Translation_prot_SH3-like_sf"/>
</dbReference>
<dbReference type="NCBIfam" id="NF007180">
    <property type="entry name" value="PRK09612.1"/>
    <property type="match status" value="1"/>
</dbReference>
<dbReference type="PANTHER" id="PTHR13691:SF16">
    <property type="entry name" value="LARGE RIBOSOMAL SUBUNIT PROTEIN UL2"/>
    <property type="match status" value="1"/>
</dbReference>
<dbReference type="PANTHER" id="PTHR13691">
    <property type="entry name" value="RIBOSOMAL PROTEIN L2"/>
    <property type="match status" value="1"/>
</dbReference>
<dbReference type="Pfam" id="PF00181">
    <property type="entry name" value="Ribosomal_L2"/>
    <property type="match status" value="1"/>
</dbReference>
<dbReference type="Pfam" id="PF03947">
    <property type="entry name" value="Ribosomal_L2_C"/>
    <property type="match status" value="1"/>
</dbReference>
<dbReference type="PIRSF" id="PIRSF002158">
    <property type="entry name" value="Ribosomal_L2"/>
    <property type="match status" value="1"/>
</dbReference>
<dbReference type="SMART" id="SM01383">
    <property type="entry name" value="Ribosomal_L2"/>
    <property type="match status" value="1"/>
</dbReference>
<dbReference type="SMART" id="SM01382">
    <property type="entry name" value="Ribosomal_L2_C"/>
    <property type="match status" value="1"/>
</dbReference>
<dbReference type="SUPFAM" id="SSF50249">
    <property type="entry name" value="Nucleic acid-binding proteins"/>
    <property type="match status" value="1"/>
</dbReference>
<dbReference type="SUPFAM" id="SSF50104">
    <property type="entry name" value="Translation proteins SH3-like domain"/>
    <property type="match status" value="1"/>
</dbReference>
<name>RL2_PICTO</name>
<evidence type="ECO:0000255" key="1">
    <source>
        <dbReference type="HAMAP-Rule" id="MF_01320"/>
    </source>
</evidence>
<evidence type="ECO:0000256" key="2">
    <source>
        <dbReference type="SAM" id="MobiDB-lite"/>
    </source>
</evidence>
<evidence type="ECO:0000305" key="3"/>